<proteinExistence type="evidence at transcript level"/>
<keyword id="KW-0119">Carbohydrate metabolism</keyword>
<keyword id="KW-0326">Glycosidase</keyword>
<keyword id="KW-0378">Hydrolase</keyword>
<keyword id="KW-0624">Polysaccharide degradation</keyword>
<keyword id="KW-0964">Secreted</keyword>
<keyword id="KW-0732">Signal</keyword>
<keyword id="KW-0858">Xylan degradation</keyword>
<gene>
    <name type="primary">xyl1</name>
</gene>
<feature type="signal peptide" evidence="2">
    <location>
        <begin position="1"/>
        <end position="19"/>
    </location>
</feature>
<feature type="chain" id="PRO_5000147292" description="Endo-1,4-beta-xylanase 1">
    <location>
        <begin position="20"/>
        <end position="216"/>
    </location>
</feature>
<feature type="domain" description="GH11" evidence="3">
    <location>
        <begin position="29"/>
        <end position="216"/>
    </location>
</feature>
<feature type="active site" description="Nucleophile" evidence="4">
    <location>
        <position position="112"/>
    </location>
</feature>
<feature type="active site" description="Proton donor" evidence="1">
    <location>
        <position position="203"/>
    </location>
</feature>
<name>XYN1_CLAPU</name>
<reference key="1">
    <citation type="journal article" date="1998" name="Phytopathology">
        <title>The xylanolytic system of Claviceps purpurea: cytological evidence for secretion of xylanases in infected rye tissue and molecular characterization of two xylanase genes.</title>
        <authorList>
            <person name="Giesbert S."/>
            <person name="Lepping H.B."/>
            <person name="Tenberge K.B."/>
            <person name="Tudzynski P."/>
        </authorList>
    </citation>
    <scope>NUCLEOTIDE SEQUENCE [GENOMIC DNA]</scope>
    <scope>SUBCELLULAR LOCATION</scope>
    <scope>INDUCTION</scope>
    <scope>FUNCTION</scope>
    <scope>DISRUPTION PHENOTYPE</scope>
    <source>
        <strain>T5</strain>
    </source>
</reference>
<dbReference type="EC" id="3.2.1.8"/>
<dbReference type="EMBL" id="Y16969">
    <property type="protein sequence ID" value="CAA76570.1"/>
    <property type="molecule type" value="Genomic_DNA"/>
</dbReference>
<dbReference type="SMR" id="O74716"/>
<dbReference type="CAZy" id="GH11">
    <property type="family name" value="Glycoside Hydrolase Family 11"/>
</dbReference>
<dbReference type="VEuPathDB" id="FungiDB:CPUR_03570"/>
<dbReference type="BRENDA" id="3.2.1.8">
    <property type="organism ID" value="1445"/>
</dbReference>
<dbReference type="UniPathway" id="UPA00114"/>
<dbReference type="GO" id="GO:0005576">
    <property type="term" value="C:extracellular region"/>
    <property type="evidence" value="ECO:0007669"/>
    <property type="project" value="UniProtKB-SubCell"/>
</dbReference>
<dbReference type="GO" id="GO:0031176">
    <property type="term" value="F:endo-1,4-beta-xylanase activity"/>
    <property type="evidence" value="ECO:0007669"/>
    <property type="project" value="UniProtKB-EC"/>
</dbReference>
<dbReference type="GO" id="GO:0045493">
    <property type="term" value="P:xylan catabolic process"/>
    <property type="evidence" value="ECO:0007669"/>
    <property type="project" value="UniProtKB-UniPathway"/>
</dbReference>
<dbReference type="Gene3D" id="2.60.120.180">
    <property type="match status" value="1"/>
</dbReference>
<dbReference type="InterPro" id="IPR013320">
    <property type="entry name" value="ConA-like_dom_sf"/>
</dbReference>
<dbReference type="InterPro" id="IPR013319">
    <property type="entry name" value="GH11/12"/>
</dbReference>
<dbReference type="InterPro" id="IPR018208">
    <property type="entry name" value="GH11_AS_1"/>
</dbReference>
<dbReference type="InterPro" id="IPR033123">
    <property type="entry name" value="GH11_dom"/>
</dbReference>
<dbReference type="InterPro" id="IPR001137">
    <property type="entry name" value="Glyco_hydro_11"/>
</dbReference>
<dbReference type="PANTHER" id="PTHR46828">
    <property type="entry name" value="ENDO-1,4-BETA-XYLANASE A-RELATED"/>
    <property type="match status" value="1"/>
</dbReference>
<dbReference type="PANTHER" id="PTHR46828:SF2">
    <property type="entry name" value="ENDO-1,4-BETA-XYLANASE A-RELATED"/>
    <property type="match status" value="1"/>
</dbReference>
<dbReference type="Pfam" id="PF00457">
    <property type="entry name" value="Glyco_hydro_11"/>
    <property type="match status" value="1"/>
</dbReference>
<dbReference type="PRINTS" id="PR00911">
    <property type="entry name" value="GLHYDRLASE11"/>
</dbReference>
<dbReference type="SUPFAM" id="SSF49899">
    <property type="entry name" value="Concanavalin A-like lectins/glucanases"/>
    <property type="match status" value="1"/>
</dbReference>
<dbReference type="PROSITE" id="PS00776">
    <property type="entry name" value="GH11_1"/>
    <property type="match status" value="1"/>
</dbReference>
<dbReference type="PROSITE" id="PS51761">
    <property type="entry name" value="GH11_3"/>
    <property type="match status" value="1"/>
</dbReference>
<organism>
    <name type="scientific">Claviceps purpurea</name>
    <name type="common">Ergot fungus</name>
    <name type="synonym">Sphacelia segetum</name>
    <dbReference type="NCBI Taxonomy" id="5111"/>
    <lineage>
        <taxon>Eukaryota</taxon>
        <taxon>Fungi</taxon>
        <taxon>Dikarya</taxon>
        <taxon>Ascomycota</taxon>
        <taxon>Pezizomycotina</taxon>
        <taxon>Sordariomycetes</taxon>
        <taxon>Hypocreomycetidae</taxon>
        <taxon>Hypocreales</taxon>
        <taxon>Clavicipitaceae</taxon>
        <taxon>Claviceps</taxon>
    </lineage>
</organism>
<protein>
    <recommendedName>
        <fullName>Endo-1,4-beta-xylanase 1</fullName>
        <shortName>Xylanase 1</shortName>
        <ecNumber>3.2.1.8</ecNumber>
    </recommendedName>
    <alternativeName>
        <fullName>1,4-beta-D-xylan xylanohydrolase 1</fullName>
    </alternativeName>
</protein>
<comment type="function">
    <text evidence="5">Endo-1,4-beta-xylanase involved in the hydrolysis of xylan, a major structural heterogeneous polysaccharide found in plant biomass representing the second most abundant polysaccharide in the biosphere, after cellulose.</text>
</comment>
<comment type="catalytic activity">
    <reaction>
        <text>Endohydrolysis of (1-&gt;4)-beta-D-xylosidic linkages in xylans.</text>
        <dbReference type="EC" id="3.2.1.8"/>
    </reaction>
</comment>
<comment type="pathway">
    <text>Glycan degradation; xylan degradation.</text>
</comment>
<comment type="subcellular location">
    <subcellularLocation>
        <location evidence="5">Secreted</location>
    </subcellularLocation>
</comment>
<comment type="induction">
    <text evidence="5">Expressed throughout the entire infection process during in infection of rye tissue.</text>
</comment>
<comment type="disruption phenotype">
    <text evidence="5">Leads to significant reduced xylanase activity.</text>
</comment>
<comment type="similarity">
    <text evidence="6">Belongs to the glycosyl hydrolase 11 (cellulase G) family.</text>
</comment>
<accession>O74716</accession>
<evidence type="ECO:0000250" key="1"/>
<evidence type="ECO:0000255" key="2"/>
<evidence type="ECO:0000255" key="3">
    <source>
        <dbReference type="PROSITE-ProRule" id="PRU01097"/>
    </source>
</evidence>
<evidence type="ECO:0000255" key="4">
    <source>
        <dbReference type="PROSITE-ProRule" id="PRU10062"/>
    </source>
</evidence>
<evidence type="ECO:0000269" key="5">
    <source>
    </source>
</evidence>
<evidence type="ECO:0000305" key="6"/>
<sequence>MFLTSVVSLVVGAISCVSAAPAAASELMQMTPRNSCYGGGLYSSYWADYGNTRYSCGAGGHYDLSWGNGGNVVAGRGWKPASPRAVTYSGSWQCNGNCYLSVYGWTINPLVEYYIVENYGNYNPSAGAQRRGQVTADGSIYDIYISTQHNQPSILGTNTFHQYWSIRRNKRVGGTVSTGVHFNAWRSLGMPLGTYDYMIVATEGFRSSGSASITVS</sequence>